<gene>
    <name evidence="1" type="primary">murD</name>
    <name type="ordered locus">SAR1159</name>
</gene>
<accession>Q6GHQ2</accession>
<comment type="function">
    <text evidence="1">Cell wall formation. Catalyzes the addition of glutamate to the nucleotide precursor UDP-N-acetylmuramoyl-L-alanine (UMA).</text>
</comment>
<comment type="catalytic activity">
    <reaction evidence="1">
        <text>UDP-N-acetyl-alpha-D-muramoyl-L-alanine + D-glutamate + ATP = UDP-N-acetyl-alpha-D-muramoyl-L-alanyl-D-glutamate + ADP + phosphate + H(+)</text>
        <dbReference type="Rhea" id="RHEA:16429"/>
        <dbReference type="ChEBI" id="CHEBI:15378"/>
        <dbReference type="ChEBI" id="CHEBI:29986"/>
        <dbReference type="ChEBI" id="CHEBI:30616"/>
        <dbReference type="ChEBI" id="CHEBI:43474"/>
        <dbReference type="ChEBI" id="CHEBI:83898"/>
        <dbReference type="ChEBI" id="CHEBI:83900"/>
        <dbReference type="ChEBI" id="CHEBI:456216"/>
        <dbReference type="EC" id="6.3.2.9"/>
    </reaction>
</comment>
<comment type="pathway">
    <text evidence="1">Cell wall biogenesis; peptidoglycan biosynthesis.</text>
</comment>
<comment type="subcellular location">
    <subcellularLocation>
        <location evidence="1">Cytoplasm</location>
    </subcellularLocation>
</comment>
<comment type="similarity">
    <text evidence="1">Belongs to the MurCDEF family.</text>
</comment>
<reference key="1">
    <citation type="journal article" date="2004" name="Proc. Natl. Acad. Sci. U.S.A.">
        <title>Complete genomes of two clinical Staphylococcus aureus strains: evidence for the rapid evolution of virulence and drug resistance.</title>
        <authorList>
            <person name="Holden M.T.G."/>
            <person name="Feil E.J."/>
            <person name="Lindsay J.A."/>
            <person name="Peacock S.J."/>
            <person name="Day N.P.J."/>
            <person name="Enright M.C."/>
            <person name="Foster T.J."/>
            <person name="Moore C.E."/>
            <person name="Hurst L."/>
            <person name="Atkin R."/>
            <person name="Barron A."/>
            <person name="Bason N."/>
            <person name="Bentley S.D."/>
            <person name="Chillingworth C."/>
            <person name="Chillingworth T."/>
            <person name="Churcher C."/>
            <person name="Clark L."/>
            <person name="Corton C."/>
            <person name="Cronin A."/>
            <person name="Doggett J."/>
            <person name="Dowd L."/>
            <person name="Feltwell T."/>
            <person name="Hance Z."/>
            <person name="Harris B."/>
            <person name="Hauser H."/>
            <person name="Holroyd S."/>
            <person name="Jagels K."/>
            <person name="James K.D."/>
            <person name="Lennard N."/>
            <person name="Line A."/>
            <person name="Mayes R."/>
            <person name="Moule S."/>
            <person name="Mungall K."/>
            <person name="Ormond D."/>
            <person name="Quail M.A."/>
            <person name="Rabbinowitsch E."/>
            <person name="Rutherford K.M."/>
            <person name="Sanders M."/>
            <person name="Sharp S."/>
            <person name="Simmonds M."/>
            <person name="Stevens K."/>
            <person name="Whitehead S."/>
            <person name="Barrell B.G."/>
            <person name="Spratt B.G."/>
            <person name="Parkhill J."/>
        </authorList>
    </citation>
    <scope>NUCLEOTIDE SEQUENCE [LARGE SCALE GENOMIC DNA]</scope>
    <source>
        <strain>MRSA252</strain>
    </source>
</reference>
<proteinExistence type="inferred from homology"/>
<name>MURD_STAAR</name>
<feature type="chain" id="PRO_0000109085" description="UDP-N-acetylmuramoylalanine--D-glutamate ligase">
    <location>
        <begin position="1"/>
        <end position="449"/>
    </location>
</feature>
<feature type="binding site" evidence="1">
    <location>
        <begin position="118"/>
        <end position="124"/>
    </location>
    <ligand>
        <name>ATP</name>
        <dbReference type="ChEBI" id="CHEBI:30616"/>
    </ligand>
</feature>
<evidence type="ECO:0000255" key="1">
    <source>
        <dbReference type="HAMAP-Rule" id="MF_00639"/>
    </source>
</evidence>
<protein>
    <recommendedName>
        <fullName evidence="1">UDP-N-acetylmuramoylalanine--D-glutamate ligase</fullName>
        <ecNumber evidence="1">6.3.2.9</ecNumber>
    </recommendedName>
    <alternativeName>
        <fullName evidence="1">D-glutamic acid-adding enzyme</fullName>
    </alternativeName>
    <alternativeName>
        <fullName evidence="1">UDP-N-acetylmuramoyl-L-alanyl-D-glutamate synthetase</fullName>
    </alternativeName>
</protein>
<organism>
    <name type="scientific">Staphylococcus aureus (strain MRSA252)</name>
    <dbReference type="NCBI Taxonomy" id="282458"/>
    <lineage>
        <taxon>Bacteria</taxon>
        <taxon>Bacillati</taxon>
        <taxon>Bacillota</taxon>
        <taxon>Bacilli</taxon>
        <taxon>Bacillales</taxon>
        <taxon>Staphylococcaceae</taxon>
        <taxon>Staphylococcus</taxon>
    </lineage>
</organism>
<sequence length="449" mass="49858">MLNYTGLENKNVLVVGLAKSGYEAAKLLSKLGANVTVNDGKDLSQDAHAKDLESMGISVVSGSHPLTLLDKNPIIVKNPGIPYTVSIIDEAVKRGLKILTEVELSYLISEAPIIAVTGTNGKTTVTSLIGDMFKKSRLTGRLSGNIGYVASKVAQEVKPTDYLVTELSSFQLLGIEKYKPHIAIITNIYSAHLDYHENLENYQNAKKQIYKNQTEEDYLICNYHQRQVIESEELKAKTLYFSTQQEVDGIYIKDGFIVYKGVRIINTEDLVLPGEHNLENILAAVLACILAGVPIKAIIDSLTTFSGIEHRLQYVGTNRTNKYYNDSKATNTLATQFALNSFNQPIIWLCGGLDRGNEFDELIPYMENVRAMVVFGQTKAKFAKLGNSQGKSVIEANNVEDAVDKVQDIIEPNDVVLLSPACASWDQYSTFEERGEKFIERFRAHLPSY</sequence>
<keyword id="KW-0067">ATP-binding</keyword>
<keyword id="KW-0131">Cell cycle</keyword>
<keyword id="KW-0132">Cell division</keyword>
<keyword id="KW-0133">Cell shape</keyword>
<keyword id="KW-0961">Cell wall biogenesis/degradation</keyword>
<keyword id="KW-0963">Cytoplasm</keyword>
<keyword id="KW-0436">Ligase</keyword>
<keyword id="KW-0547">Nucleotide-binding</keyword>
<keyword id="KW-0573">Peptidoglycan synthesis</keyword>
<dbReference type="EC" id="6.3.2.9" evidence="1"/>
<dbReference type="EMBL" id="BX571856">
    <property type="protein sequence ID" value="CAG40161.1"/>
    <property type="molecule type" value="Genomic_DNA"/>
</dbReference>
<dbReference type="RefSeq" id="WP_000935984.1">
    <property type="nucleotide sequence ID" value="NC_002952.2"/>
</dbReference>
<dbReference type="SMR" id="Q6GHQ2"/>
<dbReference type="KEGG" id="sar:SAR1159"/>
<dbReference type="HOGENOM" id="CLU_032540_0_1_9"/>
<dbReference type="UniPathway" id="UPA00219"/>
<dbReference type="Proteomes" id="UP000000596">
    <property type="component" value="Chromosome"/>
</dbReference>
<dbReference type="GO" id="GO:0005737">
    <property type="term" value="C:cytoplasm"/>
    <property type="evidence" value="ECO:0007669"/>
    <property type="project" value="UniProtKB-SubCell"/>
</dbReference>
<dbReference type="GO" id="GO:0005524">
    <property type="term" value="F:ATP binding"/>
    <property type="evidence" value="ECO:0007669"/>
    <property type="project" value="UniProtKB-UniRule"/>
</dbReference>
<dbReference type="GO" id="GO:0008764">
    <property type="term" value="F:UDP-N-acetylmuramoylalanine-D-glutamate ligase activity"/>
    <property type="evidence" value="ECO:0007669"/>
    <property type="project" value="UniProtKB-UniRule"/>
</dbReference>
<dbReference type="GO" id="GO:0051301">
    <property type="term" value="P:cell division"/>
    <property type="evidence" value="ECO:0007669"/>
    <property type="project" value="UniProtKB-KW"/>
</dbReference>
<dbReference type="GO" id="GO:0071555">
    <property type="term" value="P:cell wall organization"/>
    <property type="evidence" value="ECO:0007669"/>
    <property type="project" value="UniProtKB-KW"/>
</dbReference>
<dbReference type="GO" id="GO:0009252">
    <property type="term" value="P:peptidoglycan biosynthetic process"/>
    <property type="evidence" value="ECO:0007669"/>
    <property type="project" value="UniProtKB-UniRule"/>
</dbReference>
<dbReference type="GO" id="GO:0008360">
    <property type="term" value="P:regulation of cell shape"/>
    <property type="evidence" value="ECO:0007669"/>
    <property type="project" value="UniProtKB-KW"/>
</dbReference>
<dbReference type="Gene3D" id="3.90.190.20">
    <property type="entry name" value="Mur ligase, C-terminal domain"/>
    <property type="match status" value="1"/>
</dbReference>
<dbReference type="Gene3D" id="3.40.1190.10">
    <property type="entry name" value="Mur-like, catalytic domain"/>
    <property type="match status" value="1"/>
</dbReference>
<dbReference type="Gene3D" id="3.40.50.720">
    <property type="entry name" value="NAD(P)-binding Rossmann-like Domain"/>
    <property type="match status" value="1"/>
</dbReference>
<dbReference type="HAMAP" id="MF_00639">
    <property type="entry name" value="MurD"/>
    <property type="match status" value="1"/>
</dbReference>
<dbReference type="InterPro" id="IPR036565">
    <property type="entry name" value="Mur-like_cat_sf"/>
</dbReference>
<dbReference type="InterPro" id="IPR004101">
    <property type="entry name" value="Mur_ligase_C"/>
</dbReference>
<dbReference type="InterPro" id="IPR036615">
    <property type="entry name" value="Mur_ligase_C_dom_sf"/>
</dbReference>
<dbReference type="InterPro" id="IPR013221">
    <property type="entry name" value="Mur_ligase_cen"/>
</dbReference>
<dbReference type="InterPro" id="IPR005762">
    <property type="entry name" value="MurD"/>
</dbReference>
<dbReference type="NCBIfam" id="TIGR01087">
    <property type="entry name" value="murD"/>
    <property type="match status" value="1"/>
</dbReference>
<dbReference type="PANTHER" id="PTHR43692">
    <property type="entry name" value="UDP-N-ACETYLMURAMOYLALANINE--D-GLUTAMATE LIGASE"/>
    <property type="match status" value="1"/>
</dbReference>
<dbReference type="PANTHER" id="PTHR43692:SF1">
    <property type="entry name" value="UDP-N-ACETYLMURAMOYLALANINE--D-GLUTAMATE LIGASE"/>
    <property type="match status" value="1"/>
</dbReference>
<dbReference type="Pfam" id="PF02875">
    <property type="entry name" value="Mur_ligase_C"/>
    <property type="match status" value="1"/>
</dbReference>
<dbReference type="Pfam" id="PF08245">
    <property type="entry name" value="Mur_ligase_M"/>
    <property type="match status" value="1"/>
</dbReference>
<dbReference type="Pfam" id="PF21799">
    <property type="entry name" value="MurD-like_N"/>
    <property type="match status" value="1"/>
</dbReference>
<dbReference type="SUPFAM" id="SSF51984">
    <property type="entry name" value="MurCD N-terminal domain"/>
    <property type="match status" value="1"/>
</dbReference>
<dbReference type="SUPFAM" id="SSF53623">
    <property type="entry name" value="MurD-like peptide ligases, catalytic domain"/>
    <property type="match status" value="1"/>
</dbReference>
<dbReference type="SUPFAM" id="SSF53244">
    <property type="entry name" value="MurD-like peptide ligases, peptide-binding domain"/>
    <property type="match status" value="1"/>
</dbReference>